<keyword id="KW-0028">Amino-acid biosynthesis</keyword>
<keyword id="KW-0055">Arginine biosynthesis</keyword>
<keyword id="KW-0963">Cytoplasm</keyword>
<keyword id="KW-0456">Lyase</keyword>
<keyword id="KW-1185">Reference proteome</keyword>
<proteinExistence type="inferred from homology"/>
<evidence type="ECO:0000255" key="1">
    <source>
        <dbReference type="HAMAP-Rule" id="MF_00006"/>
    </source>
</evidence>
<sequence>MKLWGGRFVHESNSFFKKFNSSIQTDYKLVEQDIFSSMSWADALLKSGVLIKSECNEIKNALQKLLCIVKKTPNIVLDSNLEDVHSWVETQLILLVGDLGKKLHTGRSRNDQIATDLKLWCKHKIKDLFNRIIEFKIELIKISDNTQSVIMPGYTHLQRAQPITFSFWCLAYLEMIKRDEDRLKDALKRLNSSPLGCGAISGTTWNIDRENLAKSMGFKSATNNSLDSVSDRDYVVELASVASISMMHLSRFAEDLIFFNSSESKFVELSDTITSGSSLMPQKKNPDSLELIRAKSGRVFGFLVSILVVLKGLPLSYNKDMQEDKKGLFDALNTWSKCLFMSSLVLKNLHINSINCLKASKKSYSNATELADYLVNKGITFRDAHHITGQIVLEALKLNVPLEKLDLSIFKKYSSSIELDVYNFLDVISLLEKRNSKGGVAPKIVSKAIICEKKQLKI</sequence>
<protein>
    <recommendedName>
        <fullName evidence="1">Argininosuccinate lyase</fullName>
        <shortName evidence="1">ASAL</shortName>
        <ecNumber evidence="1">4.3.2.1</ecNumber>
    </recommendedName>
    <alternativeName>
        <fullName evidence="1">Arginosuccinase</fullName>
    </alternativeName>
</protein>
<accession>P59614</accession>
<name>ARLY_BUCBP</name>
<dbReference type="EC" id="4.3.2.1" evidence="1"/>
<dbReference type="EMBL" id="AE016826">
    <property type="protein sequence ID" value="AAO26788.1"/>
    <property type="molecule type" value="Genomic_DNA"/>
</dbReference>
<dbReference type="RefSeq" id="WP_011091189.1">
    <property type="nucleotide sequence ID" value="NC_004545.1"/>
</dbReference>
<dbReference type="SMR" id="P59614"/>
<dbReference type="STRING" id="224915.bbp_049"/>
<dbReference type="KEGG" id="bab:bbp_049"/>
<dbReference type="eggNOG" id="COG0165">
    <property type="taxonomic scope" value="Bacteria"/>
</dbReference>
<dbReference type="HOGENOM" id="CLU_027272_2_3_6"/>
<dbReference type="OrthoDB" id="9769623at2"/>
<dbReference type="UniPathway" id="UPA00068">
    <property type="reaction ID" value="UER00114"/>
</dbReference>
<dbReference type="Proteomes" id="UP000000601">
    <property type="component" value="Chromosome"/>
</dbReference>
<dbReference type="GO" id="GO:0005829">
    <property type="term" value="C:cytosol"/>
    <property type="evidence" value="ECO:0007669"/>
    <property type="project" value="TreeGrafter"/>
</dbReference>
<dbReference type="GO" id="GO:0004056">
    <property type="term" value="F:argininosuccinate lyase activity"/>
    <property type="evidence" value="ECO:0007669"/>
    <property type="project" value="UniProtKB-UniRule"/>
</dbReference>
<dbReference type="GO" id="GO:0042450">
    <property type="term" value="P:arginine biosynthetic process via ornithine"/>
    <property type="evidence" value="ECO:0007669"/>
    <property type="project" value="InterPro"/>
</dbReference>
<dbReference type="GO" id="GO:0006526">
    <property type="term" value="P:L-arginine biosynthetic process"/>
    <property type="evidence" value="ECO:0007669"/>
    <property type="project" value="UniProtKB-UniRule"/>
</dbReference>
<dbReference type="CDD" id="cd01359">
    <property type="entry name" value="Argininosuccinate_lyase"/>
    <property type="match status" value="1"/>
</dbReference>
<dbReference type="FunFam" id="1.10.40.30:FF:000001">
    <property type="entry name" value="Argininosuccinate lyase"/>
    <property type="match status" value="1"/>
</dbReference>
<dbReference type="FunFam" id="1.20.200.10:FF:000006">
    <property type="entry name" value="Argininosuccinate lyase"/>
    <property type="match status" value="1"/>
</dbReference>
<dbReference type="Gene3D" id="1.10.40.30">
    <property type="entry name" value="Fumarase/aspartase (C-terminal domain)"/>
    <property type="match status" value="1"/>
</dbReference>
<dbReference type="Gene3D" id="1.20.200.10">
    <property type="entry name" value="Fumarase/aspartase (Central domain)"/>
    <property type="match status" value="1"/>
</dbReference>
<dbReference type="Gene3D" id="1.10.275.10">
    <property type="entry name" value="Fumarase/aspartase (N-terminal domain)"/>
    <property type="match status" value="1"/>
</dbReference>
<dbReference type="HAMAP" id="MF_00006">
    <property type="entry name" value="Arg_succ_lyase"/>
    <property type="match status" value="1"/>
</dbReference>
<dbReference type="InterPro" id="IPR029419">
    <property type="entry name" value="Arg_succ_lyase_C"/>
</dbReference>
<dbReference type="InterPro" id="IPR009049">
    <property type="entry name" value="Argininosuccinate_lyase"/>
</dbReference>
<dbReference type="InterPro" id="IPR024083">
    <property type="entry name" value="Fumarase/histidase_N"/>
</dbReference>
<dbReference type="InterPro" id="IPR020557">
    <property type="entry name" value="Fumarate_lyase_CS"/>
</dbReference>
<dbReference type="InterPro" id="IPR000362">
    <property type="entry name" value="Fumarate_lyase_fam"/>
</dbReference>
<dbReference type="InterPro" id="IPR022761">
    <property type="entry name" value="Fumarate_lyase_N"/>
</dbReference>
<dbReference type="InterPro" id="IPR008948">
    <property type="entry name" value="L-Aspartase-like"/>
</dbReference>
<dbReference type="NCBIfam" id="TIGR00838">
    <property type="entry name" value="argH"/>
    <property type="match status" value="1"/>
</dbReference>
<dbReference type="NCBIfam" id="NF008964">
    <property type="entry name" value="PRK12308.1"/>
    <property type="match status" value="1"/>
</dbReference>
<dbReference type="PANTHER" id="PTHR43814">
    <property type="entry name" value="ARGININOSUCCINATE LYASE"/>
    <property type="match status" value="1"/>
</dbReference>
<dbReference type="PANTHER" id="PTHR43814:SF1">
    <property type="entry name" value="ARGININOSUCCINATE LYASE"/>
    <property type="match status" value="1"/>
</dbReference>
<dbReference type="Pfam" id="PF14698">
    <property type="entry name" value="ASL_C2"/>
    <property type="match status" value="1"/>
</dbReference>
<dbReference type="Pfam" id="PF00206">
    <property type="entry name" value="Lyase_1"/>
    <property type="match status" value="1"/>
</dbReference>
<dbReference type="PRINTS" id="PR00145">
    <property type="entry name" value="ARGSUCLYASE"/>
</dbReference>
<dbReference type="PRINTS" id="PR00149">
    <property type="entry name" value="FUMRATELYASE"/>
</dbReference>
<dbReference type="SUPFAM" id="SSF48557">
    <property type="entry name" value="L-aspartase-like"/>
    <property type="match status" value="1"/>
</dbReference>
<dbReference type="PROSITE" id="PS00163">
    <property type="entry name" value="FUMARATE_LYASES"/>
    <property type="match status" value="1"/>
</dbReference>
<comment type="catalytic activity">
    <reaction evidence="1">
        <text>2-(N(omega)-L-arginino)succinate = fumarate + L-arginine</text>
        <dbReference type="Rhea" id="RHEA:24020"/>
        <dbReference type="ChEBI" id="CHEBI:29806"/>
        <dbReference type="ChEBI" id="CHEBI:32682"/>
        <dbReference type="ChEBI" id="CHEBI:57472"/>
        <dbReference type="EC" id="4.3.2.1"/>
    </reaction>
</comment>
<comment type="pathway">
    <text evidence="1">Amino-acid biosynthesis; L-arginine biosynthesis; L-arginine from L-ornithine and carbamoyl phosphate: step 3/3.</text>
</comment>
<comment type="subcellular location">
    <subcellularLocation>
        <location evidence="1">Cytoplasm</location>
    </subcellularLocation>
</comment>
<comment type="similarity">
    <text evidence="1">Belongs to the lyase 1 family. Argininosuccinate lyase subfamily.</text>
</comment>
<gene>
    <name evidence="1" type="primary">argH</name>
    <name type="ordered locus">bbp_049</name>
</gene>
<organism>
    <name type="scientific">Buchnera aphidicola subsp. Baizongia pistaciae (strain Bp)</name>
    <dbReference type="NCBI Taxonomy" id="224915"/>
    <lineage>
        <taxon>Bacteria</taxon>
        <taxon>Pseudomonadati</taxon>
        <taxon>Pseudomonadota</taxon>
        <taxon>Gammaproteobacteria</taxon>
        <taxon>Enterobacterales</taxon>
        <taxon>Erwiniaceae</taxon>
        <taxon>Buchnera</taxon>
    </lineage>
</organism>
<reference key="1">
    <citation type="journal article" date="2003" name="Proc. Natl. Acad. Sci. U.S.A.">
        <title>Reductive genome evolution in Buchnera aphidicola.</title>
        <authorList>
            <person name="van Ham R.C.H.J."/>
            <person name="Kamerbeek J."/>
            <person name="Palacios C."/>
            <person name="Rausell C."/>
            <person name="Abascal F."/>
            <person name="Bastolla U."/>
            <person name="Fernandez J.M."/>
            <person name="Jimenez L."/>
            <person name="Postigo M."/>
            <person name="Silva F.J."/>
            <person name="Tamames J."/>
            <person name="Viguera E."/>
            <person name="Latorre A."/>
            <person name="Valencia A."/>
            <person name="Moran F."/>
            <person name="Moya A."/>
        </authorList>
    </citation>
    <scope>NUCLEOTIDE SEQUENCE [LARGE SCALE GENOMIC DNA]</scope>
    <source>
        <strain>Bp</strain>
    </source>
</reference>
<feature type="chain" id="PRO_0000137750" description="Argininosuccinate lyase">
    <location>
        <begin position="1"/>
        <end position="458"/>
    </location>
</feature>